<dbReference type="EMBL" id="CP000653">
    <property type="protein sequence ID" value="ABP59314.1"/>
    <property type="molecule type" value="Genomic_DNA"/>
</dbReference>
<dbReference type="RefSeq" id="WP_012016036.1">
    <property type="nucleotide sequence ID" value="NC_009436.1"/>
</dbReference>
<dbReference type="SMR" id="A4W6I4"/>
<dbReference type="STRING" id="399742.Ent638_0627"/>
<dbReference type="GeneID" id="93307801"/>
<dbReference type="KEGG" id="ent:Ent638_0627"/>
<dbReference type="eggNOG" id="COG2001">
    <property type="taxonomic scope" value="Bacteria"/>
</dbReference>
<dbReference type="HOGENOM" id="CLU_107907_2_0_6"/>
<dbReference type="OrthoDB" id="9807753at2"/>
<dbReference type="Proteomes" id="UP000000230">
    <property type="component" value="Chromosome"/>
</dbReference>
<dbReference type="GO" id="GO:0005737">
    <property type="term" value="C:cytoplasm"/>
    <property type="evidence" value="ECO:0007669"/>
    <property type="project" value="UniProtKB-UniRule"/>
</dbReference>
<dbReference type="GO" id="GO:0009295">
    <property type="term" value="C:nucleoid"/>
    <property type="evidence" value="ECO:0007669"/>
    <property type="project" value="UniProtKB-SubCell"/>
</dbReference>
<dbReference type="GO" id="GO:0003700">
    <property type="term" value="F:DNA-binding transcription factor activity"/>
    <property type="evidence" value="ECO:0007669"/>
    <property type="project" value="UniProtKB-UniRule"/>
</dbReference>
<dbReference type="GO" id="GO:0000976">
    <property type="term" value="F:transcription cis-regulatory region binding"/>
    <property type="evidence" value="ECO:0007669"/>
    <property type="project" value="TreeGrafter"/>
</dbReference>
<dbReference type="GO" id="GO:2000143">
    <property type="term" value="P:negative regulation of DNA-templated transcription initiation"/>
    <property type="evidence" value="ECO:0007669"/>
    <property type="project" value="TreeGrafter"/>
</dbReference>
<dbReference type="CDD" id="cd16321">
    <property type="entry name" value="MraZ_C"/>
    <property type="match status" value="1"/>
</dbReference>
<dbReference type="CDD" id="cd16320">
    <property type="entry name" value="MraZ_N"/>
    <property type="match status" value="1"/>
</dbReference>
<dbReference type="FunFam" id="3.40.1550.20:FF:000001">
    <property type="entry name" value="Transcriptional regulator MraZ"/>
    <property type="match status" value="1"/>
</dbReference>
<dbReference type="Gene3D" id="3.40.1550.20">
    <property type="entry name" value="Transcriptional regulator MraZ domain"/>
    <property type="match status" value="1"/>
</dbReference>
<dbReference type="HAMAP" id="MF_01008">
    <property type="entry name" value="MraZ"/>
    <property type="match status" value="1"/>
</dbReference>
<dbReference type="InterPro" id="IPR003444">
    <property type="entry name" value="MraZ"/>
</dbReference>
<dbReference type="InterPro" id="IPR035644">
    <property type="entry name" value="MraZ_C"/>
</dbReference>
<dbReference type="InterPro" id="IPR020603">
    <property type="entry name" value="MraZ_dom"/>
</dbReference>
<dbReference type="InterPro" id="IPR035642">
    <property type="entry name" value="MraZ_N"/>
</dbReference>
<dbReference type="InterPro" id="IPR038619">
    <property type="entry name" value="MraZ_sf"/>
</dbReference>
<dbReference type="InterPro" id="IPR007159">
    <property type="entry name" value="SpoVT-AbrB_dom"/>
</dbReference>
<dbReference type="InterPro" id="IPR037914">
    <property type="entry name" value="SpoVT-AbrB_sf"/>
</dbReference>
<dbReference type="NCBIfam" id="TIGR00242">
    <property type="entry name" value="division/cell wall cluster transcriptional repressor MraZ"/>
    <property type="match status" value="1"/>
</dbReference>
<dbReference type="PANTHER" id="PTHR34701">
    <property type="entry name" value="TRANSCRIPTIONAL REGULATOR MRAZ"/>
    <property type="match status" value="1"/>
</dbReference>
<dbReference type="PANTHER" id="PTHR34701:SF1">
    <property type="entry name" value="TRANSCRIPTIONAL REGULATOR MRAZ"/>
    <property type="match status" value="1"/>
</dbReference>
<dbReference type="Pfam" id="PF02381">
    <property type="entry name" value="MraZ"/>
    <property type="match status" value="2"/>
</dbReference>
<dbReference type="SUPFAM" id="SSF89447">
    <property type="entry name" value="AbrB/MazE/MraZ-like"/>
    <property type="match status" value="1"/>
</dbReference>
<dbReference type="PROSITE" id="PS51740">
    <property type="entry name" value="SPOVT_ABRB"/>
    <property type="match status" value="2"/>
</dbReference>
<reference key="1">
    <citation type="journal article" date="2010" name="PLoS Genet.">
        <title>Genome sequence of the plant growth promoting endophytic bacterium Enterobacter sp. 638.</title>
        <authorList>
            <person name="Taghavi S."/>
            <person name="van der Lelie D."/>
            <person name="Hoffman A."/>
            <person name="Zhang Y.B."/>
            <person name="Walla M.D."/>
            <person name="Vangronsveld J."/>
            <person name="Newman L."/>
            <person name="Monchy S."/>
        </authorList>
    </citation>
    <scope>NUCLEOTIDE SEQUENCE [LARGE SCALE GENOMIC DNA]</scope>
    <source>
        <strain>638</strain>
    </source>
</reference>
<sequence length="152" mass="17445">MFRGATLVNLDSKGRLSVPTRYRDQLIENASGQMVCTIDINHPCLLLYTLPEWEIIEQKLSRLSSMNPQERRVQRLLLGHASECQMDNSGRLLIAPVLRQHAGLTKEVMLVGQFNKFELWDETTWYQQVKEDIDAEQSDSGVLSDRLQDLSL</sequence>
<gene>
    <name evidence="1" type="primary">mraZ</name>
    <name type="ordered locus">Ent638_0627</name>
</gene>
<protein>
    <recommendedName>
        <fullName>Transcriptional regulator MraZ</fullName>
    </recommendedName>
</protein>
<comment type="function">
    <text evidence="1">Negatively regulates its own expression and that of the subsequent genes in the proximal part of the division and cell wall (dcw) gene cluster. Acts by binding directly to DNA. May also regulate the expression of genes outside the dcw cluster.</text>
</comment>
<comment type="subunit">
    <text evidence="1">Forms oligomers.</text>
</comment>
<comment type="subcellular location">
    <subcellularLocation>
        <location evidence="1">Cytoplasm</location>
        <location evidence="1">Nucleoid</location>
    </subcellularLocation>
</comment>
<comment type="similarity">
    <text evidence="1">Belongs to the MraZ family.</text>
</comment>
<proteinExistence type="inferred from homology"/>
<feature type="chain" id="PRO_1000062874" description="Transcriptional regulator MraZ">
    <location>
        <begin position="1"/>
        <end position="152"/>
    </location>
</feature>
<feature type="domain" description="SpoVT-AbrB 1" evidence="2">
    <location>
        <begin position="5"/>
        <end position="52"/>
    </location>
</feature>
<feature type="domain" description="SpoVT-AbrB 2" evidence="2">
    <location>
        <begin position="81"/>
        <end position="124"/>
    </location>
</feature>
<keyword id="KW-0963">Cytoplasm</keyword>
<keyword id="KW-0238">DNA-binding</keyword>
<keyword id="KW-0677">Repeat</keyword>
<keyword id="KW-0678">Repressor</keyword>
<keyword id="KW-0804">Transcription</keyword>
<keyword id="KW-0805">Transcription regulation</keyword>
<name>MRAZ_ENT38</name>
<organism>
    <name type="scientific">Enterobacter sp. (strain 638)</name>
    <dbReference type="NCBI Taxonomy" id="399742"/>
    <lineage>
        <taxon>Bacteria</taxon>
        <taxon>Pseudomonadati</taxon>
        <taxon>Pseudomonadota</taxon>
        <taxon>Gammaproteobacteria</taxon>
        <taxon>Enterobacterales</taxon>
        <taxon>Enterobacteriaceae</taxon>
        <taxon>Enterobacter</taxon>
    </lineage>
</organism>
<accession>A4W6I4</accession>
<evidence type="ECO:0000255" key="1">
    <source>
        <dbReference type="HAMAP-Rule" id="MF_01008"/>
    </source>
</evidence>
<evidence type="ECO:0000255" key="2">
    <source>
        <dbReference type="PROSITE-ProRule" id="PRU01076"/>
    </source>
</evidence>